<feature type="chain" id="PRO_1000009955" description="Uracil-DNA glycosylase">
    <location>
        <begin position="1"/>
        <end position="217"/>
    </location>
</feature>
<feature type="active site" description="Proton acceptor" evidence="1">
    <location>
        <position position="62"/>
    </location>
</feature>
<evidence type="ECO:0000255" key="1">
    <source>
        <dbReference type="HAMAP-Rule" id="MF_00148"/>
    </source>
</evidence>
<gene>
    <name evidence="1" type="primary">ung</name>
    <name type="ordered locus">M28_Spy0688</name>
</gene>
<reference key="1">
    <citation type="journal article" date="2005" name="J. Infect. Dis.">
        <title>Genome sequence of a serotype M28 strain of group A Streptococcus: potential new insights into puerperal sepsis and bacterial disease specificity.</title>
        <authorList>
            <person name="Green N.M."/>
            <person name="Zhang S."/>
            <person name="Porcella S.F."/>
            <person name="Nagiec M.J."/>
            <person name="Barbian K.D."/>
            <person name="Beres S.B."/>
            <person name="Lefebvre R.B."/>
            <person name="Musser J.M."/>
        </authorList>
    </citation>
    <scope>NUCLEOTIDE SEQUENCE [LARGE SCALE GENOMIC DNA]</scope>
    <source>
        <strain>MGAS6180</strain>
    </source>
</reference>
<accession>Q48U05</accession>
<protein>
    <recommendedName>
        <fullName evidence="1">Uracil-DNA glycosylase</fullName>
        <shortName evidence="1">UDG</shortName>
        <ecNumber evidence="1">3.2.2.27</ecNumber>
    </recommendedName>
</protein>
<keyword id="KW-0963">Cytoplasm</keyword>
<keyword id="KW-0227">DNA damage</keyword>
<keyword id="KW-0234">DNA repair</keyword>
<keyword id="KW-0378">Hydrolase</keyword>
<proteinExistence type="inferred from homology"/>
<organism>
    <name type="scientific">Streptococcus pyogenes serotype M28 (strain MGAS6180)</name>
    <dbReference type="NCBI Taxonomy" id="319701"/>
    <lineage>
        <taxon>Bacteria</taxon>
        <taxon>Bacillati</taxon>
        <taxon>Bacillota</taxon>
        <taxon>Bacilli</taxon>
        <taxon>Lactobacillales</taxon>
        <taxon>Streptococcaceae</taxon>
        <taxon>Streptococcus</taxon>
    </lineage>
</organism>
<comment type="function">
    <text evidence="1">Excises uracil residues from the DNA which can arise as a result of misincorporation of dUMP residues by DNA polymerase or due to deamination of cytosine.</text>
</comment>
<comment type="catalytic activity">
    <reaction evidence="1">
        <text>Hydrolyzes single-stranded DNA or mismatched double-stranded DNA and polynucleotides, releasing free uracil.</text>
        <dbReference type="EC" id="3.2.2.27"/>
    </reaction>
</comment>
<comment type="subcellular location">
    <subcellularLocation>
        <location evidence="1">Cytoplasm</location>
    </subcellularLocation>
</comment>
<comment type="similarity">
    <text evidence="1">Belongs to the uracil-DNA glycosylase (UDG) superfamily. UNG family.</text>
</comment>
<dbReference type="EC" id="3.2.2.27" evidence="1"/>
<dbReference type="EMBL" id="CP000056">
    <property type="protein sequence ID" value="AAX71801.1"/>
    <property type="molecule type" value="Genomic_DNA"/>
</dbReference>
<dbReference type="RefSeq" id="WP_011284713.1">
    <property type="nucleotide sequence ID" value="NC_007296.2"/>
</dbReference>
<dbReference type="SMR" id="Q48U05"/>
<dbReference type="KEGG" id="spb:M28_Spy0688"/>
<dbReference type="HOGENOM" id="CLU_032162_3_1_9"/>
<dbReference type="GO" id="GO:0005737">
    <property type="term" value="C:cytoplasm"/>
    <property type="evidence" value="ECO:0007669"/>
    <property type="project" value="UniProtKB-SubCell"/>
</dbReference>
<dbReference type="GO" id="GO:0004844">
    <property type="term" value="F:uracil DNA N-glycosylase activity"/>
    <property type="evidence" value="ECO:0007669"/>
    <property type="project" value="UniProtKB-UniRule"/>
</dbReference>
<dbReference type="GO" id="GO:0097510">
    <property type="term" value="P:base-excision repair, AP site formation via deaminated base removal"/>
    <property type="evidence" value="ECO:0007669"/>
    <property type="project" value="TreeGrafter"/>
</dbReference>
<dbReference type="CDD" id="cd10027">
    <property type="entry name" value="UDG-F1-like"/>
    <property type="match status" value="1"/>
</dbReference>
<dbReference type="FunFam" id="3.40.470.10:FF:000008">
    <property type="entry name" value="Uracil-DNA glycosylase"/>
    <property type="match status" value="1"/>
</dbReference>
<dbReference type="Gene3D" id="3.40.470.10">
    <property type="entry name" value="Uracil-DNA glycosylase-like domain"/>
    <property type="match status" value="1"/>
</dbReference>
<dbReference type="HAMAP" id="MF_00148">
    <property type="entry name" value="UDG"/>
    <property type="match status" value="1"/>
</dbReference>
<dbReference type="InterPro" id="IPR002043">
    <property type="entry name" value="UDG_fam1"/>
</dbReference>
<dbReference type="InterPro" id="IPR018085">
    <property type="entry name" value="Ura-DNA_Glyclase_AS"/>
</dbReference>
<dbReference type="InterPro" id="IPR005122">
    <property type="entry name" value="Uracil-DNA_glycosylase-like"/>
</dbReference>
<dbReference type="InterPro" id="IPR036895">
    <property type="entry name" value="Uracil-DNA_glycosylase-like_sf"/>
</dbReference>
<dbReference type="NCBIfam" id="NF003588">
    <property type="entry name" value="PRK05254.1-1"/>
    <property type="match status" value="1"/>
</dbReference>
<dbReference type="NCBIfam" id="NF003589">
    <property type="entry name" value="PRK05254.1-2"/>
    <property type="match status" value="1"/>
</dbReference>
<dbReference type="NCBIfam" id="NF003592">
    <property type="entry name" value="PRK05254.1-5"/>
    <property type="match status" value="1"/>
</dbReference>
<dbReference type="NCBIfam" id="TIGR00628">
    <property type="entry name" value="ung"/>
    <property type="match status" value="1"/>
</dbReference>
<dbReference type="PANTHER" id="PTHR11264">
    <property type="entry name" value="URACIL-DNA GLYCOSYLASE"/>
    <property type="match status" value="1"/>
</dbReference>
<dbReference type="PANTHER" id="PTHR11264:SF0">
    <property type="entry name" value="URACIL-DNA GLYCOSYLASE"/>
    <property type="match status" value="1"/>
</dbReference>
<dbReference type="Pfam" id="PF03167">
    <property type="entry name" value="UDG"/>
    <property type="match status" value="1"/>
</dbReference>
<dbReference type="SMART" id="SM00986">
    <property type="entry name" value="UDG"/>
    <property type="match status" value="1"/>
</dbReference>
<dbReference type="SMART" id="SM00987">
    <property type="entry name" value="UreE_C"/>
    <property type="match status" value="1"/>
</dbReference>
<dbReference type="SUPFAM" id="SSF52141">
    <property type="entry name" value="Uracil-DNA glycosylase-like"/>
    <property type="match status" value="1"/>
</dbReference>
<dbReference type="PROSITE" id="PS00130">
    <property type="entry name" value="U_DNA_GLYCOSYLASE"/>
    <property type="match status" value="1"/>
</dbReference>
<sequence length="217" mass="24227">MAHSIWHEKIKSFLPEHYYGRINHFLDEAYASGLVYPPRENVFKALQVTPLEETKVLILGQDPYHGPKQAQGLSFSVPEEISAPPSLINILKELADDIGPRDHHDLSTWASQGVLLLNACLTVPAGQANGHAGLIWEPFTDAVIKVLNEKDSPVVFILWGAYARKKKAFITNPKHHIIESPHPSPLSSYRGFFGSKPFSRTNAILEKEGMTGIDWLQ</sequence>
<name>UNG_STRPM</name>